<dbReference type="EC" id="2.1.3.2" evidence="1"/>
<dbReference type="EMBL" id="CP000517">
    <property type="protein sequence ID" value="ABX27425.1"/>
    <property type="molecule type" value="Genomic_DNA"/>
</dbReference>
<dbReference type="RefSeq" id="WP_012212048.1">
    <property type="nucleotide sequence ID" value="NC_010080.1"/>
</dbReference>
<dbReference type="SMR" id="A8YVZ6"/>
<dbReference type="KEGG" id="lhe:lhv_1446"/>
<dbReference type="eggNOG" id="COG0540">
    <property type="taxonomic scope" value="Bacteria"/>
</dbReference>
<dbReference type="HOGENOM" id="CLU_043846_2_1_9"/>
<dbReference type="UniPathway" id="UPA00070">
    <property type="reaction ID" value="UER00116"/>
</dbReference>
<dbReference type="Proteomes" id="UP000000790">
    <property type="component" value="Chromosome"/>
</dbReference>
<dbReference type="GO" id="GO:0005829">
    <property type="term" value="C:cytosol"/>
    <property type="evidence" value="ECO:0007669"/>
    <property type="project" value="TreeGrafter"/>
</dbReference>
<dbReference type="GO" id="GO:0016597">
    <property type="term" value="F:amino acid binding"/>
    <property type="evidence" value="ECO:0007669"/>
    <property type="project" value="InterPro"/>
</dbReference>
<dbReference type="GO" id="GO:0004070">
    <property type="term" value="F:aspartate carbamoyltransferase activity"/>
    <property type="evidence" value="ECO:0007669"/>
    <property type="project" value="UniProtKB-UniRule"/>
</dbReference>
<dbReference type="GO" id="GO:0006207">
    <property type="term" value="P:'de novo' pyrimidine nucleobase biosynthetic process"/>
    <property type="evidence" value="ECO:0007669"/>
    <property type="project" value="InterPro"/>
</dbReference>
<dbReference type="GO" id="GO:0044205">
    <property type="term" value="P:'de novo' UMP biosynthetic process"/>
    <property type="evidence" value="ECO:0007669"/>
    <property type="project" value="UniProtKB-UniRule"/>
</dbReference>
<dbReference type="GO" id="GO:0006520">
    <property type="term" value="P:amino acid metabolic process"/>
    <property type="evidence" value="ECO:0007669"/>
    <property type="project" value="InterPro"/>
</dbReference>
<dbReference type="FunFam" id="3.40.50.1370:FF:000011">
    <property type="entry name" value="Aspartate carbamoyltransferase"/>
    <property type="match status" value="1"/>
</dbReference>
<dbReference type="Gene3D" id="3.40.50.1370">
    <property type="entry name" value="Aspartate/ornithine carbamoyltransferase"/>
    <property type="match status" value="2"/>
</dbReference>
<dbReference type="HAMAP" id="MF_00001">
    <property type="entry name" value="Asp_carb_tr"/>
    <property type="match status" value="1"/>
</dbReference>
<dbReference type="InterPro" id="IPR006132">
    <property type="entry name" value="Asp/Orn_carbamoyltranf_P-bd"/>
</dbReference>
<dbReference type="InterPro" id="IPR006130">
    <property type="entry name" value="Asp/Orn_carbamoylTrfase"/>
</dbReference>
<dbReference type="InterPro" id="IPR036901">
    <property type="entry name" value="Asp/Orn_carbamoylTrfase_sf"/>
</dbReference>
<dbReference type="InterPro" id="IPR002082">
    <property type="entry name" value="Asp_carbamoyltransf"/>
</dbReference>
<dbReference type="InterPro" id="IPR006131">
    <property type="entry name" value="Asp_carbamoyltransf_Asp/Orn-bd"/>
</dbReference>
<dbReference type="NCBIfam" id="TIGR00670">
    <property type="entry name" value="asp_carb_tr"/>
    <property type="match status" value="1"/>
</dbReference>
<dbReference type="NCBIfam" id="NF002032">
    <property type="entry name" value="PRK00856.1"/>
    <property type="match status" value="1"/>
</dbReference>
<dbReference type="PANTHER" id="PTHR45753:SF6">
    <property type="entry name" value="ASPARTATE CARBAMOYLTRANSFERASE"/>
    <property type="match status" value="1"/>
</dbReference>
<dbReference type="PANTHER" id="PTHR45753">
    <property type="entry name" value="ORNITHINE CARBAMOYLTRANSFERASE, MITOCHONDRIAL"/>
    <property type="match status" value="1"/>
</dbReference>
<dbReference type="Pfam" id="PF00185">
    <property type="entry name" value="OTCace"/>
    <property type="match status" value="1"/>
</dbReference>
<dbReference type="Pfam" id="PF02729">
    <property type="entry name" value="OTCace_N"/>
    <property type="match status" value="1"/>
</dbReference>
<dbReference type="PRINTS" id="PR00100">
    <property type="entry name" value="AOTCASE"/>
</dbReference>
<dbReference type="PRINTS" id="PR00101">
    <property type="entry name" value="ATCASE"/>
</dbReference>
<dbReference type="SUPFAM" id="SSF53671">
    <property type="entry name" value="Aspartate/ornithine carbamoyltransferase"/>
    <property type="match status" value="1"/>
</dbReference>
<name>PYRB_LACH4</name>
<reference key="1">
    <citation type="journal article" date="2008" name="J. Bacteriol.">
        <title>Genome sequence of Lactobacillus helveticus: an organism distinguished by selective gene loss and IS element expansion.</title>
        <authorList>
            <person name="Callanan M."/>
            <person name="Kaleta P."/>
            <person name="O'Callaghan J."/>
            <person name="O'Sullivan O."/>
            <person name="Jordan K."/>
            <person name="McAuliffe O."/>
            <person name="Sangrador-Vegas A."/>
            <person name="Slattery L."/>
            <person name="Fitzgerald G.F."/>
            <person name="Beresford T."/>
            <person name="Ross R.P."/>
        </authorList>
    </citation>
    <scope>NUCLEOTIDE SEQUENCE [LARGE SCALE GENOMIC DNA]</scope>
    <source>
        <strain>DPC 4571</strain>
    </source>
</reference>
<proteinExistence type="inferred from homology"/>
<organism>
    <name type="scientific">Lactobacillus helveticus (strain DPC 4571)</name>
    <dbReference type="NCBI Taxonomy" id="405566"/>
    <lineage>
        <taxon>Bacteria</taxon>
        <taxon>Bacillati</taxon>
        <taxon>Bacillota</taxon>
        <taxon>Bacilli</taxon>
        <taxon>Lactobacillales</taxon>
        <taxon>Lactobacillaceae</taxon>
        <taxon>Lactobacillus</taxon>
    </lineage>
</organism>
<sequence>MKNLNLVALPHFVSVENLKNDEVKALIKRAEYFKKSGAVARLTSPVYVTNMFFEDSSRTHTSFEMAERKLGLTVIPFDPAHSSVNKGETLYDTSLVMNALGIDLEVIRHSQNEYYEDLINLKQHQKLNIGVINAGDGSGQHPSQCMLDMMTIHEHFGHFKGLKVAIVGDITNSRVAKSDMELLTRLGAEVYFSGPEYWYSKDFDQYGKYEELDKLIPEMDVMMLLRVQHERHSGDPNEKKFDAHRYHEKYGINHKRYEAMKKDTIIMHPGPINHDVELSGDLVESDKCMFVRQMENGVFMRMAMLEAVLRGRKLGGLE</sequence>
<protein>
    <recommendedName>
        <fullName evidence="1">Aspartate carbamoyltransferase catalytic subunit</fullName>
        <ecNumber evidence="1">2.1.3.2</ecNumber>
    </recommendedName>
    <alternativeName>
        <fullName evidence="1">Aspartate transcarbamylase</fullName>
        <shortName evidence="1">ATCase</shortName>
    </alternativeName>
</protein>
<gene>
    <name evidence="1" type="primary">pyrB</name>
    <name type="ordered locus">lhv_1446</name>
</gene>
<comment type="function">
    <text evidence="1">Catalyzes the condensation of carbamoyl phosphate and aspartate to form carbamoyl aspartate and inorganic phosphate, the committed step in the de novo pyrimidine nucleotide biosynthesis pathway.</text>
</comment>
<comment type="catalytic activity">
    <reaction evidence="1">
        <text>carbamoyl phosphate + L-aspartate = N-carbamoyl-L-aspartate + phosphate + H(+)</text>
        <dbReference type="Rhea" id="RHEA:20013"/>
        <dbReference type="ChEBI" id="CHEBI:15378"/>
        <dbReference type="ChEBI" id="CHEBI:29991"/>
        <dbReference type="ChEBI" id="CHEBI:32814"/>
        <dbReference type="ChEBI" id="CHEBI:43474"/>
        <dbReference type="ChEBI" id="CHEBI:58228"/>
        <dbReference type="EC" id="2.1.3.2"/>
    </reaction>
</comment>
<comment type="pathway">
    <text evidence="1">Pyrimidine metabolism; UMP biosynthesis via de novo pathway; (S)-dihydroorotate from bicarbonate: step 2/3.</text>
</comment>
<comment type="subunit">
    <text evidence="1">Heterododecamer (2C3:3R2) of six catalytic PyrB chains organized as two trimers (C3), and six regulatory PyrI chains organized as three dimers (R2).</text>
</comment>
<comment type="similarity">
    <text evidence="1">Belongs to the aspartate/ornithine carbamoyltransferase superfamily. ATCase family.</text>
</comment>
<feature type="chain" id="PRO_1000070899" description="Aspartate carbamoyltransferase catalytic subunit">
    <location>
        <begin position="1"/>
        <end position="318"/>
    </location>
</feature>
<feature type="binding site" evidence="1">
    <location>
        <position position="58"/>
    </location>
    <ligand>
        <name>carbamoyl phosphate</name>
        <dbReference type="ChEBI" id="CHEBI:58228"/>
    </ligand>
</feature>
<feature type="binding site" evidence="1">
    <location>
        <position position="59"/>
    </location>
    <ligand>
        <name>carbamoyl phosphate</name>
        <dbReference type="ChEBI" id="CHEBI:58228"/>
    </ligand>
</feature>
<feature type="binding site" evidence="1">
    <location>
        <position position="86"/>
    </location>
    <ligand>
        <name>L-aspartate</name>
        <dbReference type="ChEBI" id="CHEBI:29991"/>
    </ligand>
</feature>
<feature type="binding site" evidence="1">
    <location>
        <position position="108"/>
    </location>
    <ligand>
        <name>carbamoyl phosphate</name>
        <dbReference type="ChEBI" id="CHEBI:58228"/>
    </ligand>
</feature>
<feature type="binding site" evidence="1">
    <location>
        <position position="141"/>
    </location>
    <ligand>
        <name>carbamoyl phosphate</name>
        <dbReference type="ChEBI" id="CHEBI:58228"/>
    </ligand>
</feature>
<feature type="binding site" evidence="1">
    <location>
        <position position="144"/>
    </location>
    <ligand>
        <name>carbamoyl phosphate</name>
        <dbReference type="ChEBI" id="CHEBI:58228"/>
    </ligand>
</feature>
<feature type="binding site" evidence="1">
    <location>
        <position position="174"/>
    </location>
    <ligand>
        <name>L-aspartate</name>
        <dbReference type="ChEBI" id="CHEBI:29991"/>
    </ligand>
</feature>
<feature type="binding site" evidence="1">
    <location>
        <position position="226"/>
    </location>
    <ligand>
        <name>L-aspartate</name>
        <dbReference type="ChEBI" id="CHEBI:29991"/>
    </ligand>
</feature>
<feature type="binding site" evidence="1">
    <location>
        <position position="270"/>
    </location>
    <ligand>
        <name>carbamoyl phosphate</name>
        <dbReference type="ChEBI" id="CHEBI:58228"/>
    </ligand>
</feature>
<feature type="binding site" evidence="1">
    <location>
        <position position="271"/>
    </location>
    <ligand>
        <name>carbamoyl phosphate</name>
        <dbReference type="ChEBI" id="CHEBI:58228"/>
    </ligand>
</feature>
<accession>A8YVZ6</accession>
<evidence type="ECO:0000255" key="1">
    <source>
        <dbReference type="HAMAP-Rule" id="MF_00001"/>
    </source>
</evidence>
<keyword id="KW-0665">Pyrimidine biosynthesis</keyword>
<keyword id="KW-0808">Transferase</keyword>